<organism>
    <name type="scientific">Salmonella heidelberg (strain SL476)</name>
    <dbReference type="NCBI Taxonomy" id="454169"/>
    <lineage>
        <taxon>Bacteria</taxon>
        <taxon>Pseudomonadati</taxon>
        <taxon>Pseudomonadota</taxon>
        <taxon>Gammaproteobacteria</taxon>
        <taxon>Enterobacterales</taxon>
        <taxon>Enterobacteriaceae</taxon>
        <taxon>Salmonella</taxon>
    </lineage>
</organism>
<protein>
    <recommendedName>
        <fullName evidence="1">Glutathione-regulated potassium-efflux system protein KefC</fullName>
    </recommendedName>
    <alternativeName>
        <fullName evidence="1">K(+)/H(+) antiporter</fullName>
    </alternativeName>
</protein>
<feature type="chain" id="PRO_1000145548" description="Glutathione-regulated potassium-efflux system protein KefC">
    <location>
        <begin position="1"/>
        <end position="620"/>
    </location>
</feature>
<feature type="transmembrane region" description="Helical" evidence="1">
    <location>
        <begin position="4"/>
        <end position="24"/>
    </location>
</feature>
<feature type="transmembrane region" description="Helical" evidence="1">
    <location>
        <begin position="26"/>
        <end position="46"/>
    </location>
</feature>
<feature type="transmembrane region" description="Helical" evidence="1">
    <location>
        <begin position="54"/>
        <end position="74"/>
    </location>
</feature>
<feature type="transmembrane region" description="Helical" evidence="1">
    <location>
        <begin position="90"/>
        <end position="110"/>
    </location>
</feature>
<feature type="transmembrane region" description="Helical" evidence="1">
    <location>
        <begin position="114"/>
        <end position="134"/>
    </location>
</feature>
<feature type="transmembrane region" description="Helical" evidence="1">
    <location>
        <begin position="149"/>
        <end position="169"/>
    </location>
</feature>
<feature type="transmembrane region" description="Helical" evidence="1">
    <location>
        <begin position="178"/>
        <end position="198"/>
    </location>
</feature>
<feature type="transmembrane region" description="Helical" evidence="1">
    <location>
        <begin position="218"/>
        <end position="238"/>
    </location>
</feature>
<feature type="transmembrane region" description="Helical" evidence="1">
    <location>
        <begin position="270"/>
        <end position="290"/>
    </location>
</feature>
<feature type="transmembrane region" description="Helical" evidence="1">
    <location>
        <begin position="294"/>
        <end position="314"/>
    </location>
</feature>
<feature type="transmembrane region" description="Helical" evidence="1">
    <location>
        <begin position="327"/>
        <end position="347"/>
    </location>
</feature>
<feature type="transmembrane region" description="Helical" evidence="1">
    <location>
        <begin position="359"/>
        <end position="379"/>
    </location>
</feature>
<feature type="domain" description="RCK N-terminal" evidence="2">
    <location>
        <begin position="399"/>
        <end position="518"/>
    </location>
</feature>
<feature type="region of interest" description="Disordered" evidence="3">
    <location>
        <begin position="599"/>
        <end position="620"/>
    </location>
</feature>
<comment type="function">
    <text evidence="1">Pore-forming subunit of a potassium efflux system that confers protection against electrophiles. Catalyzes K(+)/H(+) antiport.</text>
</comment>
<comment type="subunit">
    <text evidence="1">Homodimer. Interacts with the regulatory subunit KefF.</text>
</comment>
<comment type="subcellular location">
    <subcellularLocation>
        <location evidence="1">Cell inner membrane</location>
        <topology evidence="1">Multi-pass membrane protein</topology>
    </subcellularLocation>
</comment>
<comment type="similarity">
    <text evidence="1">Belongs to the monovalent cation:proton antiporter 2 (CPA2) transporter (TC 2.A.37) family. KefC subfamily.</text>
</comment>
<sequence length="620" mass="67127">MDSHTLLQALIYLGSAALIVPIAVRLGLGSVLGYLIAGCIIGPWGLRLVTDAESILHFAEIGVVLMLFVIGLELDPQRLWKLRASVFGGGALQMVVCGGLIGLFCMFLGLRWQVAELIGMTLALSSTAIAMQAMNERNLTVSQVGRSAFAVLLFQDIAAIPLVAMIPLLAASGASTTLGAFALSALKVAGALALVVLLGRYVTRPALRFVARSGLREVFSAVALFLVFGFGLLLEEVGLSMAMGAFLAGVLLASSEYRHALESDIEPFKGLLLGLFFIGVGMSIDFGTLVENPLRILLLLAGFLAIKIVMLWLVARPLGVPAKQRRWFAVLLGQGSEFAFVVFGAAQMAGVLEPEWAKALTLAVALSMAATPIFLMLLTRMEKTEKGEAREADEIDEEQPRVIVAGFGRFGQIAGRLLLSSGVKMVVLDHDPDHIETLRKFGMKVFYGDATRMDLLESAGAAKAEVLINAIDDPQTNLQLSELVKSHFPHLQIIARARDVDHYIRLRQAGVAMPERETFEGALKSGRQALEALGLGRYEARERADLFRHFNTRMVEEMAKGENDPLSRAAAYKRTSAMLSEIITEDREHLSLIQRHGWQGTAEGKHSGEAADEPEVKPSI</sequence>
<dbReference type="EMBL" id="CP001120">
    <property type="protein sequence ID" value="ACF66119.1"/>
    <property type="molecule type" value="Genomic_DNA"/>
</dbReference>
<dbReference type="RefSeq" id="WP_000377168.1">
    <property type="nucleotide sequence ID" value="NC_011083.1"/>
</dbReference>
<dbReference type="SMR" id="B4TJ42"/>
<dbReference type="KEGG" id="seh:SeHA_C0091"/>
<dbReference type="HOGENOM" id="CLU_005126_9_3_6"/>
<dbReference type="Proteomes" id="UP000001866">
    <property type="component" value="Chromosome"/>
</dbReference>
<dbReference type="GO" id="GO:0005886">
    <property type="term" value="C:plasma membrane"/>
    <property type="evidence" value="ECO:0007669"/>
    <property type="project" value="UniProtKB-SubCell"/>
</dbReference>
<dbReference type="GO" id="GO:0019899">
    <property type="term" value="F:enzyme binding"/>
    <property type="evidence" value="ECO:0007669"/>
    <property type="project" value="InterPro"/>
</dbReference>
<dbReference type="GO" id="GO:0015503">
    <property type="term" value="F:glutathione-regulated potassium exporter activity"/>
    <property type="evidence" value="ECO:0007669"/>
    <property type="project" value="UniProtKB-UniRule"/>
</dbReference>
<dbReference type="GO" id="GO:0015643">
    <property type="term" value="F:toxic substance binding"/>
    <property type="evidence" value="ECO:0007669"/>
    <property type="project" value="InterPro"/>
</dbReference>
<dbReference type="GO" id="GO:1902600">
    <property type="term" value="P:proton transmembrane transport"/>
    <property type="evidence" value="ECO:0007669"/>
    <property type="project" value="InterPro"/>
</dbReference>
<dbReference type="GO" id="GO:0051595">
    <property type="term" value="P:response to methylglyoxal"/>
    <property type="evidence" value="ECO:0007669"/>
    <property type="project" value="InterPro"/>
</dbReference>
<dbReference type="FunFam" id="1.20.1530.20:FF:000001">
    <property type="entry name" value="Glutathione-regulated potassium-efflux system protein KefB"/>
    <property type="match status" value="1"/>
</dbReference>
<dbReference type="FunFam" id="3.40.50.720:FF:000036">
    <property type="entry name" value="Glutathione-regulated potassium-efflux system protein KefB"/>
    <property type="match status" value="1"/>
</dbReference>
<dbReference type="Gene3D" id="1.20.1530.20">
    <property type="match status" value="1"/>
</dbReference>
<dbReference type="Gene3D" id="3.40.50.720">
    <property type="entry name" value="NAD(P)-binding Rossmann-like Domain"/>
    <property type="match status" value="1"/>
</dbReference>
<dbReference type="HAMAP" id="MF_01413">
    <property type="entry name" value="K_H_efflux_KefC"/>
    <property type="match status" value="1"/>
</dbReference>
<dbReference type="InterPro" id="IPR006153">
    <property type="entry name" value="Cation/H_exchanger_TM"/>
</dbReference>
<dbReference type="InterPro" id="IPR004771">
    <property type="entry name" value="K/H_exchanger"/>
</dbReference>
<dbReference type="InterPro" id="IPR023941">
    <property type="entry name" value="K_H_efflux_KefC"/>
</dbReference>
<dbReference type="InterPro" id="IPR006036">
    <property type="entry name" value="K_uptake_TrkA"/>
</dbReference>
<dbReference type="InterPro" id="IPR038770">
    <property type="entry name" value="Na+/solute_symporter_sf"/>
</dbReference>
<dbReference type="InterPro" id="IPR036291">
    <property type="entry name" value="NAD(P)-bd_dom_sf"/>
</dbReference>
<dbReference type="InterPro" id="IPR003148">
    <property type="entry name" value="RCK_N"/>
</dbReference>
<dbReference type="NCBIfam" id="TIGR00932">
    <property type="entry name" value="2a37"/>
    <property type="match status" value="1"/>
</dbReference>
<dbReference type="NCBIfam" id="NF002924">
    <property type="entry name" value="PRK03562.1"/>
    <property type="match status" value="1"/>
</dbReference>
<dbReference type="PANTHER" id="PTHR46157:SF3">
    <property type="entry name" value="GLUTATHIONE-REGULATED POTASSIUM-EFFLUX SYSTEM PROTEIN KEFC"/>
    <property type="match status" value="1"/>
</dbReference>
<dbReference type="PANTHER" id="PTHR46157">
    <property type="entry name" value="K(+) EFFLUX ANTIPORTER 3, CHLOROPLASTIC"/>
    <property type="match status" value="1"/>
</dbReference>
<dbReference type="Pfam" id="PF00999">
    <property type="entry name" value="Na_H_Exchanger"/>
    <property type="match status" value="1"/>
</dbReference>
<dbReference type="Pfam" id="PF02254">
    <property type="entry name" value="TrkA_N"/>
    <property type="match status" value="1"/>
</dbReference>
<dbReference type="PRINTS" id="PR00335">
    <property type="entry name" value="KUPTAKETRKA"/>
</dbReference>
<dbReference type="SUPFAM" id="SSF51735">
    <property type="entry name" value="NAD(P)-binding Rossmann-fold domains"/>
    <property type="match status" value="1"/>
</dbReference>
<dbReference type="PROSITE" id="PS51201">
    <property type="entry name" value="RCK_N"/>
    <property type="match status" value="1"/>
</dbReference>
<proteinExistence type="inferred from homology"/>
<accession>B4TJ42</accession>
<keyword id="KW-0050">Antiport</keyword>
<keyword id="KW-0997">Cell inner membrane</keyword>
<keyword id="KW-1003">Cell membrane</keyword>
<keyword id="KW-0406">Ion transport</keyword>
<keyword id="KW-0472">Membrane</keyword>
<keyword id="KW-0630">Potassium</keyword>
<keyword id="KW-0633">Potassium transport</keyword>
<keyword id="KW-0812">Transmembrane</keyword>
<keyword id="KW-1133">Transmembrane helix</keyword>
<keyword id="KW-0813">Transport</keyword>
<name>KEFC_SALHS</name>
<gene>
    <name evidence="1" type="primary">kefC</name>
    <name type="ordered locus">SeHA_C0091</name>
</gene>
<evidence type="ECO:0000255" key="1">
    <source>
        <dbReference type="HAMAP-Rule" id="MF_01413"/>
    </source>
</evidence>
<evidence type="ECO:0000255" key="2">
    <source>
        <dbReference type="PROSITE-ProRule" id="PRU00543"/>
    </source>
</evidence>
<evidence type="ECO:0000256" key="3">
    <source>
        <dbReference type="SAM" id="MobiDB-lite"/>
    </source>
</evidence>
<reference key="1">
    <citation type="journal article" date="2011" name="J. Bacteriol.">
        <title>Comparative genomics of 28 Salmonella enterica isolates: evidence for CRISPR-mediated adaptive sublineage evolution.</title>
        <authorList>
            <person name="Fricke W.F."/>
            <person name="Mammel M.K."/>
            <person name="McDermott P.F."/>
            <person name="Tartera C."/>
            <person name="White D.G."/>
            <person name="Leclerc J.E."/>
            <person name="Ravel J."/>
            <person name="Cebula T.A."/>
        </authorList>
    </citation>
    <scope>NUCLEOTIDE SEQUENCE [LARGE SCALE GENOMIC DNA]</scope>
    <source>
        <strain>SL476</strain>
    </source>
</reference>